<proteinExistence type="inferred from homology"/>
<accession>A6ZVB8</accession>
<evidence type="ECO:0000250" key="1"/>
<evidence type="ECO:0000255" key="2"/>
<evidence type="ECO:0000305" key="3"/>
<protein>
    <recommendedName>
        <fullName>Altered inheritance of mitochondria protein 20</fullName>
    </recommendedName>
</protein>
<name>AIM20_YEAS7</name>
<comment type="function">
    <text evidence="1">Involved in cell cycle progression and surviving DNA damage.</text>
</comment>
<comment type="subcellular location">
    <subcellularLocation>
        <location evidence="1">Vacuole membrane</location>
        <topology evidence="1">Single-pass membrane protein</topology>
    </subcellularLocation>
</comment>
<comment type="similarity">
    <text evidence="3">Belongs to the SKG1 family.</text>
</comment>
<gene>
    <name type="primary">AIM20</name>
    <name type="ORF">SCY_2634</name>
</gene>
<reference key="1">
    <citation type="journal article" date="2007" name="Proc. Natl. Acad. Sci. U.S.A.">
        <title>Genome sequencing and comparative analysis of Saccharomyces cerevisiae strain YJM789.</title>
        <authorList>
            <person name="Wei W."/>
            <person name="McCusker J.H."/>
            <person name="Hyman R.W."/>
            <person name="Jones T."/>
            <person name="Ning Y."/>
            <person name="Cao Z."/>
            <person name="Gu Z."/>
            <person name="Bruno D."/>
            <person name="Miranda M."/>
            <person name="Nguyen M."/>
            <person name="Wilhelmy J."/>
            <person name="Komp C."/>
            <person name="Tamse R."/>
            <person name="Wang X."/>
            <person name="Jia P."/>
            <person name="Luedi P."/>
            <person name="Oefner P.J."/>
            <person name="David L."/>
            <person name="Dietrich F.S."/>
            <person name="Li Y."/>
            <person name="Davis R.W."/>
            <person name="Steinmetz L.M."/>
        </authorList>
    </citation>
    <scope>NUCLEOTIDE SEQUENCE [LARGE SCALE GENOMIC DNA]</scope>
    <source>
        <strain>YJM789</strain>
    </source>
</reference>
<keyword id="KW-0131">Cell cycle</keyword>
<keyword id="KW-0472">Membrane</keyword>
<keyword id="KW-0812">Transmembrane</keyword>
<keyword id="KW-1133">Transmembrane helix</keyword>
<keyword id="KW-0926">Vacuole</keyword>
<feature type="chain" id="PRO_0000399680" description="Altered inheritance of mitochondria protein 20">
    <location>
        <begin position="1"/>
        <end position="204"/>
    </location>
</feature>
<feature type="transmembrane region" description="Helical" evidence="2">
    <location>
        <begin position="6"/>
        <end position="26"/>
    </location>
</feature>
<dbReference type="EMBL" id="AAFW02000124">
    <property type="protein sequence ID" value="EDN61343.1"/>
    <property type="molecule type" value="Genomic_DNA"/>
</dbReference>
<dbReference type="HOGENOM" id="CLU_116407_0_0_1"/>
<dbReference type="Proteomes" id="UP000007060">
    <property type="component" value="Unassembled WGS sequence"/>
</dbReference>
<dbReference type="GO" id="GO:0005774">
    <property type="term" value="C:vacuolar membrane"/>
    <property type="evidence" value="ECO:0007669"/>
    <property type="project" value="UniProtKB-SubCell"/>
</dbReference>
<organism>
    <name type="scientific">Saccharomyces cerevisiae (strain YJM789)</name>
    <name type="common">Baker's yeast</name>
    <dbReference type="NCBI Taxonomy" id="307796"/>
    <lineage>
        <taxon>Eukaryota</taxon>
        <taxon>Fungi</taxon>
        <taxon>Dikarya</taxon>
        <taxon>Ascomycota</taxon>
        <taxon>Saccharomycotina</taxon>
        <taxon>Saccharomycetes</taxon>
        <taxon>Saccharomycetales</taxon>
        <taxon>Saccharomycetaceae</taxon>
        <taxon>Saccharomyces</taxon>
    </lineage>
</organism>
<sequence>MGNASVAVGTAVGIPIAVGVIIALIFWCKLQRRYKKEEIRDADLEKMVMEEVAVSVYDGFKAEINSSSEASTINEKEANQDLKPCQEKTAKAGYTPAYRRQLNASMGTLRPKKQSTAYINVPVIFSGEKVNYGMVRDPSYSFMYPLTLSRKETSSLRSASTSNLSSSTENTALHEEIKLDDPYENDFTNYTVNKREFIDSLRPR</sequence>